<dbReference type="EC" id="3.2.1.8"/>
<dbReference type="EMBL" id="Z49961">
    <property type="protein sequence ID" value="CAA90235.1"/>
    <property type="molecule type" value="Genomic_DNA"/>
</dbReference>
<dbReference type="SMR" id="Q60041"/>
<dbReference type="CAZy" id="GH10">
    <property type="family name" value="Glycoside Hydrolase Family 10"/>
</dbReference>
<dbReference type="GO" id="GO:0031176">
    <property type="term" value="F:endo-1,4-beta-xylanase activity"/>
    <property type="evidence" value="ECO:0007669"/>
    <property type="project" value="UniProtKB-EC"/>
</dbReference>
<dbReference type="GO" id="GO:0045493">
    <property type="term" value="P:xylan catabolic process"/>
    <property type="evidence" value="ECO:0007669"/>
    <property type="project" value="UniProtKB-KW"/>
</dbReference>
<dbReference type="Gene3D" id="3.20.20.80">
    <property type="entry name" value="Glycosidases"/>
    <property type="match status" value="1"/>
</dbReference>
<dbReference type="InterPro" id="IPR044846">
    <property type="entry name" value="GH10"/>
</dbReference>
<dbReference type="InterPro" id="IPR001000">
    <property type="entry name" value="GH10_dom"/>
</dbReference>
<dbReference type="InterPro" id="IPR017853">
    <property type="entry name" value="Glycoside_hydrolase_SF"/>
</dbReference>
<dbReference type="PANTHER" id="PTHR31490:SF88">
    <property type="entry name" value="BETA-XYLANASE"/>
    <property type="match status" value="1"/>
</dbReference>
<dbReference type="PANTHER" id="PTHR31490">
    <property type="entry name" value="GLYCOSYL HYDROLASE"/>
    <property type="match status" value="1"/>
</dbReference>
<dbReference type="Pfam" id="PF00331">
    <property type="entry name" value="Glyco_hydro_10"/>
    <property type="match status" value="1"/>
</dbReference>
<dbReference type="PRINTS" id="PR00134">
    <property type="entry name" value="GLHYDRLASE10"/>
</dbReference>
<dbReference type="SMART" id="SM00633">
    <property type="entry name" value="Glyco_10"/>
    <property type="match status" value="1"/>
</dbReference>
<dbReference type="SUPFAM" id="SSF51445">
    <property type="entry name" value="(Trans)glycosidases"/>
    <property type="match status" value="1"/>
</dbReference>
<dbReference type="PROSITE" id="PS51760">
    <property type="entry name" value="GH10_2"/>
    <property type="match status" value="1"/>
</dbReference>
<gene>
    <name type="primary">xynB</name>
</gene>
<organism>
    <name type="scientific">Thermotoga neapolitana</name>
    <dbReference type="NCBI Taxonomy" id="2337"/>
    <lineage>
        <taxon>Bacteria</taxon>
        <taxon>Thermotogati</taxon>
        <taxon>Thermotogota</taxon>
        <taxon>Thermotogae</taxon>
        <taxon>Thermotogales</taxon>
        <taxon>Thermotogaceae</taxon>
        <taxon>Thermotoga</taxon>
    </lineage>
</organism>
<evidence type="ECO:0000250" key="1"/>
<evidence type="ECO:0000255" key="2"/>
<evidence type="ECO:0000255" key="3">
    <source>
        <dbReference type="PROSITE-ProRule" id="PRU01096"/>
    </source>
</evidence>
<evidence type="ECO:0000305" key="4"/>
<sequence>MKGLPALLLLLIGCVSSFGSQDVPLRVLAEKLNIHIGFAAGNNFWSLPDAEKYMEVAKREFNILTPGNQMKWDTIHPERNRYNFEPAEKHVEFALKNDMIVHGHTLVWHNQLPGWLTGQEWSKEELLNILEDHVKTVVSHFRGRVKIWDVVNEAVSDSGTYRESIWYRTIGPEYIEKALIWAKEADPDAILIYNDYNIEEINAKSNFVYNMIKNLREKGVPIDGIGFQMHIDYRGINYESFKKNLERFAELGLQIYITEMDRGFPLGGSVGYYLKKQAEVYRRIFEICLDNPAVRAIQFWGFTDKYSWVPGFFKGYGKALIFDENYNPKPCYFAIRELMEEKLKER</sequence>
<protein>
    <recommendedName>
        <fullName>Endo-1,4-beta-xylanase B</fullName>
        <shortName>Xylanase B</shortName>
        <ecNumber>3.2.1.8</ecNumber>
    </recommendedName>
    <alternativeName>
        <fullName>1,4-beta-D-xylan xylanohydrolase B</fullName>
    </alternativeName>
</protein>
<reference key="1">
    <citation type="submission" date="1995-12" db="EMBL/GenBank/DDBJ databases">
        <authorList>
            <person name="Zverlov V."/>
            <person name="Piotukh K."/>
            <person name="Velikodvorskaja G."/>
            <person name="Goetz F."/>
            <person name="Borriss R."/>
        </authorList>
    </citation>
    <scope>NUCLEOTIDE SEQUENCE [GENOMIC DNA]</scope>
    <source>
        <strain>Z2706-MC24</strain>
    </source>
</reference>
<proteinExistence type="inferred from homology"/>
<name>XYNB_THENE</name>
<accession>Q60041</accession>
<feature type="signal peptide" evidence="2">
    <location>
        <begin position="1"/>
        <end position="19"/>
    </location>
</feature>
<feature type="chain" id="PRO_0000007988" description="Endo-1,4-beta-xylanase B">
    <location>
        <begin position="20"/>
        <end position="346"/>
    </location>
</feature>
<feature type="domain" description="GH10" evidence="3">
    <location>
        <begin position="41"/>
        <end position="338"/>
    </location>
</feature>
<feature type="active site" description="Proton donor" evidence="1">
    <location>
        <position position="153"/>
    </location>
</feature>
<feature type="active site" description="Nucleophile" evidence="1">
    <location>
        <position position="259"/>
    </location>
</feature>
<comment type="catalytic activity">
    <reaction>
        <text>Endohydrolysis of (1-&gt;4)-beta-D-xylosidic linkages in xylans.</text>
        <dbReference type="EC" id="3.2.1.8"/>
    </reaction>
</comment>
<comment type="similarity">
    <text evidence="4">Belongs to the glycosyl hydrolase 10 (cellulase F) family.</text>
</comment>
<keyword id="KW-0119">Carbohydrate metabolism</keyword>
<keyword id="KW-0326">Glycosidase</keyword>
<keyword id="KW-0378">Hydrolase</keyword>
<keyword id="KW-0624">Polysaccharide degradation</keyword>
<keyword id="KW-0732">Signal</keyword>
<keyword id="KW-0858">Xylan degradation</keyword>